<protein>
    <recommendedName>
        <fullName evidence="1">Translation initiation factor IF-3</fullName>
    </recommendedName>
</protein>
<reference key="1">
    <citation type="journal article" date="2006" name="Science">
        <title>Genomic islands and the ecology and evolution of Prochlorococcus.</title>
        <authorList>
            <person name="Coleman M.L."/>
            <person name="Sullivan M.B."/>
            <person name="Martiny A.C."/>
            <person name="Steglich C."/>
            <person name="Barry K."/>
            <person name="Delong E.F."/>
            <person name="Chisholm S.W."/>
        </authorList>
    </citation>
    <scope>NUCLEOTIDE SEQUENCE [LARGE SCALE GENOMIC DNA]</scope>
    <source>
        <strain>MIT 9312</strain>
    </source>
</reference>
<sequence length="190" mass="22294">MPPRPRFDRRSPVRELPNINERIKYPQLRVVDSDGKQLGVIDRLEALEIASQRELDLVLVSEKANPPVCRVMDYGKYKFEQEKKAKEARKKSHQTEVKEVKMRYKIDKHDYDVRIGQATKFLKSGDKVKCTVFFRGREIQHSNLAETLLLKMANDLEEQSEIQQKPKREGRNMIMFLSPRKTPLIKKDEG</sequence>
<keyword id="KW-0963">Cytoplasm</keyword>
<keyword id="KW-0396">Initiation factor</keyword>
<keyword id="KW-0648">Protein biosynthesis</keyword>
<organism>
    <name type="scientific">Prochlorococcus marinus (strain MIT 9312)</name>
    <dbReference type="NCBI Taxonomy" id="74546"/>
    <lineage>
        <taxon>Bacteria</taxon>
        <taxon>Bacillati</taxon>
        <taxon>Cyanobacteriota</taxon>
        <taxon>Cyanophyceae</taxon>
        <taxon>Synechococcales</taxon>
        <taxon>Prochlorococcaceae</taxon>
        <taxon>Prochlorococcus</taxon>
    </lineage>
</organism>
<dbReference type="EMBL" id="CP000111">
    <property type="protein sequence ID" value="ABB50790.1"/>
    <property type="molecule type" value="Genomic_DNA"/>
</dbReference>
<dbReference type="RefSeq" id="WP_011377271.1">
    <property type="nucleotide sequence ID" value="NC_007577.1"/>
</dbReference>
<dbReference type="SMR" id="Q318A5"/>
<dbReference type="STRING" id="74546.PMT9312_1729"/>
<dbReference type="KEGG" id="pmi:PMT9312_1729"/>
<dbReference type="eggNOG" id="COG0290">
    <property type="taxonomic scope" value="Bacteria"/>
</dbReference>
<dbReference type="HOGENOM" id="CLU_054919_3_2_3"/>
<dbReference type="OrthoDB" id="9806014at2"/>
<dbReference type="Proteomes" id="UP000002715">
    <property type="component" value="Chromosome"/>
</dbReference>
<dbReference type="GO" id="GO:0005829">
    <property type="term" value="C:cytosol"/>
    <property type="evidence" value="ECO:0007669"/>
    <property type="project" value="TreeGrafter"/>
</dbReference>
<dbReference type="GO" id="GO:0016020">
    <property type="term" value="C:membrane"/>
    <property type="evidence" value="ECO:0007669"/>
    <property type="project" value="TreeGrafter"/>
</dbReference>
<dbReference type="GO" id="GO:0043022">
    <property type="term" value="F:ribosome binding"/>
    <property type="evidence" value="ECO:0007669"/>
    <property type="project" value="TreeGrafter"/>
</dbReference>
<dbReference type="GO" id="GO:0003743">
    <property type="term" value="F:translation initiation factor activity"/>
    <property type="evidence" value="ECO:0007669"/>
    <property type="project" value="UniProtKB-UniRule"/>
</dbReference>
<dbReference type="GO" id="GO:0032790">
    <property type="term" value="P:ribosome disassembly"/>
    <property type="evidence" value="ECO:0007669"/>
    <property type="project" value="TreeGrafter"/>
</dbReference>
<dbReference type="FunFam" id="3.10.20.80:FF:000001">
    <property type="entry name" value="Translation initiation factor IF-3"/>
    <property type="match status" value="1"/>
</dbReference>
<dbReference type="FunFam" id="3.30.110.10:FF:000001">
    <property type="entry name" value="Translation initiation factor IF-3"/>
    <property type="match status" value="1"/>
</dbReference>
<dbReference type="Gene3D" id="3.30.110.10">
    <property type="entry name" value="Translation initiation factor 3 (IF-3), C-terminal domain"/>
    <property type="match status" value="1"/>
</dbReference>
<dbReference type="Gene3D" id="3.10.20.80">
    <property type="entry name" value="Translation initiation factor 3 (IF-3), N-terminal domain"/>
    <property type="match status" value="1"/>
</dbReference>
<dbReference type="HAMAP" id="MF_00080">
    <property type="entry name" value="IF_3"/>
    <property type="match status" value="1"/>
</dbReference>
<dbReference type="InterPro" id="IPR036788">
    <property type="entry name" value="T_IF-3_C_sf"/>
</dbReference>
<dbReference type="InterPro" id="IPR036787">
    <property type="entry name" value="T_IF-3_N_sf"/>
</dbReference>
<dbReference type="InterPro" id="IPR019813">
    <property type="entry name" value="Translation_initiation_fac3_CS"/>
</dbReference>
<dbReference type="InterPro" id="IPR001288">
    <property type="entry name" value="Translation_initiation_fac_3"/>
</dbReference>
<dbReference type="InterPro" id="IPR019815">
    <property type="entry name" value="Translation_initiation_fac_3_C"/>
</dbReference>
<dbReference type="InterPro" id="IPR019814">
    <property type="entry name" value="Translation_initiation_fac_3_N"/>
</dbReference>
<dbReference type="NCBIfam" id="TIGR00168">
    <property type="entry name" value="infC"/>
    <property type="match status" value="1"/>
</dbReference>
<dbReference type="PANTHER" id="PTHR10938">
    <property type="entry name" value="TRANSLATION INITIATION FACTOR IF-3"/>
    <property type="match status" value="1"/>
</dbReference>
<dbReference type="PANTHER" id="PTHR10938:SF0">
    <property type="entry name" value="TRANSLATION INITIATION FACTOR IF-3, MITOCHONDRIAL"/>
    <property type="match status" value="1"/>
</dbReference>
<dbReference type="Pfam" id="PF00707">
    <property type="entry name" value="IF3_C"/>
    <property type="match status" value="1"/>
</dbReference>
<dbReference type="Pfam" id="PF05198">
    <property type="entry name" value="IF3_N"/>
    <property type="match status" value="1"/>
</dbReference>
<dbReference type="SUPFAM" id="SSF55200">
    <property type="entry name" value="Translation initiation factor IF3, C-terminal domain"/>
    <property type="match status" value="1"/>
</dbReference>
<dbReference type="SUPFAM" id="SSF54364">
    <property type="entry name" value="Translation initiation factor IF3, N-terminal domain"/>
    <property type="match status" value="1"/>
</dbReference>
<dbReference type="PROSITE" id="PS00938">
    <property type="entry name" value="IF3"/>
    <property type="match status" value="1"/>
</dbReference>
<proteinExistence type="inferred from homology"/>
<feature type="chain" id="PRO_1000004556" description="Translation initiation factor IF-3">
    <location>
        <begin position="1"/>
        <end position="190"/>
    </location>
</feature>
<accession>Q318A5</accession>
<name>IF3_PROM9</name>
<gene>
    <name evidence="1" type="primary">infC</name>
    <name type="ordered locus">PMT9312_1729</name>
</gene>
<comment type="function">
    <text evidence="1">IF-3 binds to the 30S ribosomal subunit and shifts the equilibrium between 70S ribosomes and their 50S and 30S subunits in favor of the free subunits, thus enhancing the availability of 30S subunits on which protein synthesis initiation begins.</text>
</comment>
<comment type="subunit">
    <text evidence="1">Monomer.</text>
</comment>
<comment type="subcellular location">
    <subcellularLocation>
        <location evidence="1">Cytoplasm</location>
    </subcellularLocation>
</comment>
<comment type="similarity">
    <text evidence="1">Belongs to the IF-3 family.</text>
</comment>
<evidence type="ECO:0000255" key="1">
    <source>
        <dbReference type="HAMAP-Rule" id="MF_00080"/>
    </source>
</evidence>